<organism>
    <name type="scientific">Arabidopsis thaliana</name>
    <name type="common">Mouse-ear cress</name>
    <dbReference type="NCBI Taxonomy" id="3702"/>
    <lineage>
        <taxon>Eukaryota</taxon>
        <taxon>Viridiplantae</taxon>
        <taxon>Streptophyta</taxon>
        <taxon>Embryophyta</taxon>
        <taxon>Tracheophyta</taxon>
        <taxon>Spermatophyta</taxon>
        <taxon>Magnoliopsida</taxon>
        <taxon>eudicotyledons</taxon>
        <taxon>Gunneridae</taxon>
        <taxon>Pentapetalae</taxon>
        <taxon>rosids</taxon>
        <taxon>malvids</taxon>
        <taxon>Brassicales</taxon>
        <taxon>Brassicaceae</taxon>
        <taxon>Camelineae</taxon>
        <taxon>Arabidopsis</taxon>
    </lineage>
</organism>
<name>RL36A_ARATH</name>
<protein>
    <recommendedName>
        <fullName evidence="2">Large ribosomal subunit protein eL42z/eL42y</fullName>
    </recommendedName>
    <alternativeName>
        <fullName>60S ribosomal protein L36a</fullName>
    </alternativeName>
</protein>
<proteinExistence type="inferred from homology"/>
<feature type="chain" id="PRO_0000149131" description="Large ribosomal subunit protein eL42z/eL42y">
    <location>
        <begin position="1"/>
        <end position="105"/>
    </location>
</feature>
<feature type="region of interest" description="Disordered" evidence="1">
    <location>
        <begin position="28"/>
        <end position="57"/>
    </location>
</feature>
<comment type="alternative products">
    <event type="alternative splicing"/>
    <isoform>
        <id>O23290-1</id>
        <name>1</name>
        <sequence type="displayed"/>
    </isoform>
    <text>A number of isoforms are produced. According to EST sequences.</text>
</comment>
<comment type="similarity">
    <text evidence="3">Belongs to the eukaryotic ribosomal protein eL42 family.</text>
</comment>
<sequence length="105" mass="12125">MVNIPKTKNTYCKNKECKKHTLHKVTQYKKGKDSLAAQGKRRYDRKQSGYGGQTKPVFHKKAKTTKKIVLRLQCQSCKHFSQRPIKRCKHFEIGGDKKGKGTSLF</sequence>
<gene>
    <name type="primary">RPL36AA</name>
    <name type="ordered locus">At3g23390</name>
    <name type="ORF">MLM24.22</name>
</gene>
<gene>
    <name type="primary">RPL36AB</name>
    <name type="ordered locus">At4g14320</name>
    <name type="ORF">dl3200c</name>
    <name type="ORF">FCAALL.124</name>
</gene>
<reference key="1">
    <citation type="journal article" date="2000" name="DNA Res.">
        <title>Structural analysis of Arabidopsis thaliana chromosome 3. I. Sequence features of the regions of 4,504,864 bp covered by sixty P1 and TAC clones.</title>
        <authorList>
            <person name="Sato S."/>
            <person name="Nakamura Y."/>
            <person name="Kaneko T."/>
            <person name="Katoh T."/>
            <person name="Asamizu E."/>
            <person name="Tabata S."/>
        </authorList>
    </citation>
    <scope>NUCLEOTIDE SEQUENCE [LARGE SCALE GENOMIC DNA] (AT3G23390)</scope>
    <source>
        <strain>cv. Columbia</strain>
    </source>
</reference>
<reference key="2">
    <citation type="journal article" date="1998" name="Nature">
        <title>Analysis of 1.9 Mb of contiguous sequence from chromosome 4 of Arabidopsis thaliana.</title>
        <authorList>
            <person name="Bevan M."/>
            <person name="Bancroft I."/>
            <person name="Bent E."/>
            <person name="Love K."/>
            <person name="Goodman H.M."/>
            <person name="Dean C."/>
            <person name="Bergkamp R."/>
            <person name="Dirkse W."/>
            <person name="van Staveren M."/>
            <person name="Stiekema W."/>
            <person name="Drost L."/>
            <person name="Ridley P."/>
            <person name="Hudson S.-A."/>
            <person name="Patel K."/>
            <person name="Murphy G."/>
            <person name="Piffanelli P."/>
            <person name="Wedler H."/>
            <person name="Wedler E."/>
            <person name="Wambutt R."/>
            <person name="Weitzenegger T."/>
            <person name="Pohl T."/>
            <person name="Terryn N."/>
            <person name="Gielen J."/>
            <person name="Villarroel R."/>
            <person name="De Clercq R."/>
            <person name="van Montagu M."/>
            <person name="Lecharny A."/>
            <person name="Aubourg S."/>
            <person name="Gy I."/>
            <person name="Kreis M."/>
            <person name="Lao N."/>
            <person name="Kavanagh T."/>
            <person name="Hempel S."/>
            <person name="Kotter P."/>
            <person name="Entian K.-D."/>
            <person name="Rieger M."/>
            <person name="Schaefer M."/>
            <person name="Funk B."/>
            <person name="Mueller-Auer S."/>
            <person name="Silvey M."/>
            <person name="James R."/>
            <person name="Monfort A."/>
            <person name="Pons A."/>
            <person name="Puigdomenech P."/>
            <person name="Douka A."/>
            <person name="Voukelatou E."/>
            <person name="Milioni D."/>
            <person name="Hatzopoulos P."/>
            <person name="Piravandi E."/>
            <person name="Obermaier B."/>
            <person name="Hilbert H."/>
            <person name="Duesterhoeft A."/>
            <person name="Moores T."/>
            <person name="Jones J.D.G."/>
            <person name="Eneva T."/>
            <person name="Palme K."/>
            <person name="Benes V."/>
            <person name="Rechmann S."/>
            <person name="Ansorge W."/>
            <person name="Cooke R."/>
            <person name="Berger C."/>
            <person name="Delseny M."/>
            <person name="Voet M."/>
            <person name="Volckaert G."/>
            <person name="Mewes H.-W."/>
            <person name="Klosterman S."/>
            <person name="Schueller C."/>
            <person name="Chalwatzis N."/>
        </authorList>
    </citation>
    <scope>NUCLEOTIDE SEQUENCE [LARGE SCALE GENOMIC DNA] (AT4G14320)</scope>
    <source>
        <strain>cv. Columbia</strain>
    </source>
</reference>
<reference key="3">
    <citation type="journal article" date="1999" name="Nature">
        <title>Sequence and analysis of chromosome 4 of the plant Arabidopsis thaliana.</title>
        <authorList>
            <person name="Mayer K.F.X."/>
            <person name="Schueller C."/>
            <person name="Wambutt R."/>
            <person name="Murphy G."/>
            <person name="Volckaert G."/>
            <person name="Pohl T."/>
            <person name="Duesterhoeft A."/>
            <person name="Stiekema W."/>
            <person name="Entian K.-D."/>
            <person name="Terryn N."/>
            <person name="Harris B."/>
            <person name="Ansorge W."/>
            <person name="Brandt P."/>
            <person name="Grivell L.A."/>
            <person name="Rieger M."/>
            <person name="Weichselgartner M."/>
            <person name="de Simone V."/>
            <person name="Obermaier B."/>
            <person name="Mache R."/>
            <person name="Mueller M."/>
            <person name="Kreis M."/>
            <person name="Delseny M."/>
            <person name="Puigdomenech P."/>
            <person name="Watson M."/>
            <person name="Schmidtheini T."/>
            <person name="Reichert B."/>
            <person name="Portetelle D."/>
            <person name="Perez-Alonso M."/>
            <person name="Boutry M."/>
            <person name="Bancroft I."/>
            <person name="Vos P."/>
            <person name="Hoheisel J."/>
            <person name="Zimmermann W."/>
            <person name="Wedler H."/>
            <person name="Ridley P."/>
            <person name="Langham S.-A."/>
            <person name="McCullagh B."/>
            <person name="Bilham L."/>
            <person name="Robben J."/>
            <person name="van der Schueren J."/>
            <person name="Grymonprez B."/>
            <person name="Chuang Y.-J."/>
            <person name="Vandenbussche F."/>
            <person name="Braeken M."/>
            <person name="Weltjens I."/>
            <person name="Voet M."/>
            <person name="Bastiaens I."/>
            <person name="Aert R."/>
            <person name="Defoor E."/>
            <person name="Weitzenegger T."/>
            <person name="Bothe G."/>
            <person name="Ramsperger U."/>
            <person name="Hilbert H."/>
            <person name="Braun M."/>
            <person name="Holzer E."/>
            <person name="Brandt A."/>
            <person name="Peters S."/>
            <person name="van Staveren M."/>
            <person name="Dirkse W."/>
            <person name="Mooijman P."/>
            <person name="Klein Lankhorst R."/>
            <person name="Rose M."/>
            <person name="Hauf J."/>
            <person name="Koetter P."/>
            <person name="Berneiser S."/>
            <person name="Hempel S."/>
            <person name="Feldpausch M."/>
            <person name="Lamberth S."/>
            <person name="Van den Daele H."/>
            <person name="De Keyser A."/>
            <person name="Buysshaert C."/>
            <person name="Gielen J."/>
            <person name="Villarroel R."/>
            <person name="De Clercq R."/>
            <person name="van Montagu M."/>
            <person name="Rogers J."/>
            <person name="Cronin A."/>
            <person name="Quail M.A."/>
            <person name="Bray-Allen S."/>
            <person name="Clark L."/>
            <person name="Doggett J."/>
            <person name="Hall S."/>
            <person name="Kay M."/>
            <person name="Lennard N."/>
            <person name="McLay K."/>
            <person name="Mayes R."/>
            <person name="Pettett A."/>
            <person name="Rajandream M.A."/>
            <person name="Lyne M."/>
            <person name="Benes V."/>
            <person name="Rechmann S."/>
            <person name="Borkova D."/>
            <person name="Bloecker H."/>
            <person name="Scharfe M."/>
            <person name="Grimm M."/>
            <person name="Loehnert T.-H."/>
            <person name="Dose S."/>
            <person name="de Haan M."/>
            <person name="Maarse A.C."/>
            <person name="Schaefer M."/>
            <person name="Mueller-Auer S."/>
            <person name="Gabel C."/>
            <person name="Fuchs M."/>
            <person name="Fartmann B."/>
            <person name="Granderath K."/>
            <person name="Dauner D."/>
            <person name="Herzl A."/>
            <person name="Neumann S."/>
            <person name="Argiriou A."/>
            <person name="Vitale D."/>
            <person name="Liguori R."/>
            <person name="Piravandi E."/>
            <person name="Massenet O."/>
            <person name="Quigley F."/>
            <person name="Clabauld G."/>
            <person name="Muendlein A."/>
            <person name="Felber R."/>
            <person name="Schnabl S."/>
            <person name="Hiller R."/>
            <person name="Schmidt W."/>
            <person name="Lecharny A."/>
            <person name="Aubourg S."/>
            <person name="Chefdor F."/>
            <person name="Cooke R."/>
            <person name="Berger C."/>
            <person name="Monfort A."/>
            <person name="Casacuberta E."/>
            <person name="Gibbons T."/>
            <person name="Weber N."/>
            <person name="Vandenbol M."/>
            <person name="Bargues M."/>
            <person name="Terol J."/>
            <person name="Torres A."/>
            <person name="Perez-Perez A."/>
            <person name="Purnelle B."/>
            <person name="Bent E."/>
            <person name="Johnson S."/>
            <person name="Tacon D."/>
            <person name="Jesse T."/>
            <person name="Heijnen L."/>
            <person name="Schwarz S."/>
            <person name="Scholler P."/>
            <person name="Heber S."/>
            <person name="Francs P."/>
            <person name="Bielke C."/>
            <person name="Frishman D."/>
            <person name="Haase D."/>
            <person name="Lemcke K."/>
            <person name="Mewes H.-W."/>
            <person name="Stocker S."/>
            <person name="Zaccaria P."/>
            <person name="Bevan M."/>
            <person name="Wilson R.K."/>
            <person name="de la Bastide M."/>
            <person name="Habermann K."/>
            <person name="Parnell L."/>
            <person name="Dedhia N."/>
            <person name="Gnoj L."/>
            <person name="Schutz K."/>
            <person name="Huang E."/>
            <person name="Spiegel L."/>
            <person name="Sekhon M."/>
            <person name="Murray J."/>
            <person name="Sheet P."/>
            <person name="Cordes M."/>
            <person name="Abu-Threideh J."/>
            <person name="Stoneking T."/>
            <person name="Kalicki J."/>
            <person name="Graves T."/>
            <person name="Harmon G."/>
            <person name="Edwards J."/>
            <person name="Latreille P."/>
            <person name="Courtney L."/>
            <person name="Cloud J."/>
            <person name="Abbott A."/>
            <person name="Scott K."/>
            <person name="Johnson D."/>
            <person name="Minx P."/>
            <person name="Bentley D."/>
            <person name="Fulton B."/>
            <person name="Miller N."/>
            <person name="Greco T."/>
            <person name="Kemp K."/>
            <person name="Kramer J."/>
            <person name="Fulton L."/>
            <person name="Mardis E."/>
            <person name="Dante M."/>
            <person name="Pepin K."/>
            <person name="Hillier L.W."/>
            <person name="Nelson J."/>
            <person name="Spieth J."/>
            <person name="Ryan E."/>
            <person name="Andrews S."/>
            <person name="Geisel C."/>
            <person name="Layman D."/>
            <person name="Du H."/>
            <person name="Ali J."/>
            <person name="Berghoff A."/>
            <person name="Jones K."/>
            <person name="Drone K."/>
            <person name="Cotton M."/>
            <person name="Joshu C."/>
            <person name="Antonoiu B."/>
            <person name="Zidanic M."/>
            <person name="Strong C."/>
            <person name="Sun H."/>
            <person name="Lamar B."/>
            <person name="Yordan C."/>
            <person name="Ma P."/>
            <person name="Zhong J."/>
            <person name="Preston R."/>
            <person name="Vil D."/>
            <person name="Shekher M."/>
            <person name="Matero A."/>
            <person name="Shah R."/>
            <person name="Swaby I.K."/>
            <person name="O'Shaughnessy A."/>
            <person name="Rodriguez M."/>
            <person name="Hoffman J."/>
            <person name="Till S."/>
            <person name="Granat S."/>
            <person name="Shohdy N."/>
            <person name="Hasegawa A."/>
            <person name="Hameed A."/>
            <person name="Lodhi M."/>
            <person name="Johnson A."/>
            <person name="Chen E."/>
            <person name="Marra M.A."/>
            <person name="Martienssen R."/>
            <person name="McCombie W.R."/>
        </authorList>
    </citation>
    <scope>NUCLEOTIDE SEQUENCE [LARGE SCALE GENOMIC DNA] (AT4G14320)</scope>
    <source>
        <strain>cv. Columbia</strain>
    </source>
</reference>
<reference key="4">
    <citation type="journal article" date="2017" name="Plant J.">
        <title>Araport11: a complete reannotation of the Arabidopsis thaliana reference genome.</title>
        <authorList>
            <person name="Cheng C.Y."/>
            <person name="Krishnakumar V."/>
            <person name="Chan A.P."/>
            <person name="Thibaud-Nissen F."/>
            <person name="Schobel S."/>
            <person name="Town C.D."/>
        </authorList>
    </citation>
    <scope>GENOME REANNOTATION</scope>
    <source>
        <strain>cv. Columbia</strain>
    </source>
</reference>
<reference key="5">
    <citation type="journal article" date="2003" name="Science">
        <title>Empirical analysis of transcriptional activity in the Arabidopsis genome.</title>
        <authorList>
            <person name="Yamada K."/>
            <person name="Lim J."/>
            <person name="Dale J.M."/>
            <person name="Chen H."/>
            <person name="Shinn P."/>
            <person name="Palm C.J."/>
            <person name="Southwick A.M."/>
            <person name="Wu H.C."/>
            <person name="Kim C.J."/>
            <person name="Nguyen M."/>
            <person name="Pham P.K."/>
            <person name="Cheuk R.F."/>
            <person name="Karlin-Newmann G."/>
            <person name="Liu S.X."/>
            <person name="Lam B."/>
            <person name="Sakano H."/>
            <person name="Wu T."/>
            <person name="Yu G."/>
            <person name="Miranda M."/>
            <person name="Quach H.L."/>
            <person name="Tripp M."/>
            <person name="Chang C.H."/>
            <person name="Lee J.M."/>
            <person name="Toriumi M.J."/>
            <person name="Chan M.M."/>
            <person name="Tang C.C."/>
            <person name="Onodera C.S."/>
            <person name="Deng J.M."/>
            <person name="Akiyama K."/>
            <person name="Ansari Y."/>
            <person name="Arakawa T."/>
            <person name="Banh J."/>
            <person name="Banno F."/>
            <person name="Bowser L."/>
            <person name="Brooks S.Y."/>
            <person name="Carninci P."/>
            <person name="Chao Q."/>
            <person name="Choy N."/>
            <person name="Enju A."/>
            <person name="Goldsmith A.D."/>
            <person name="Gurjal M."/>
            <person name="Hansen N.F."/>
            <person name="Hayashizaki Y."/>
            <person name="Johnson-Hopson C."/>
            <person name="Hsuan V.W."/>
            <person name="Iida K."/>
            <person name="Karnes M."/>
            <person name="Khan S."/>
            <person name="Koesema E."/>
            <person name="Ishida J."/>
            <person name="Jiang P.X."/>
            <person name="Jones T."/>
            <person name="Kawai J."/>
            <person name="Kamiya A."/>
            <person name="Meyers C."/>
            <person name="Nakajima M."/>
            <person name="Narusaka M."/>
            <person name="Seki M."/>
            <person name="Sakurai T."/>
            <person name="Satou M."/>
            <person name="Tamse R."/>
            <person name="Vaysberg M."/>
            <person name="Wallender E.K."/>
            <person name="Wong C."/>
            <person name="Yamamura Y."/>
            <person name="Yuan S."/>
            <person name="Shinozaki K."/>
            <person name="Davis R.W."/>
            <person name="Theologis A."/>
            <person name="Ecker J.R."/>
        </authorList>
    </citation>
    <scope>NUCLEOTIDE SEQUENCE [LARGE SCALE MRNA] (AT3G23390 AND AT4G14320)</scope>
    <source>
        <strain>cv. Columbia</strain>
    </source>
</reference>
<reference key="6">
    <citation type="submission" date="2002-03" db="EMBL/GenBank/DDBJ databases">
        <title>Full-length cDNA from Arabidopsis thaliana.</title>
        <authorList>
            <person name="Brover V.V."/>
            <person name="Troukhan M.E."/>
            <person name="Alexandrov N.A."/>
            <person name="Lu Y.-P."/>
            <person name="Flavell R.B."/>
            <person name="Feldmann K.A."/>
        </authorList>
    </citation>
    <scope>NUCLEOTIDE SEQUENCE [LARGE SCALE MRNA] (AT3G23390 AND AT4G14320)</scope>
</reference>
<reference key="7">
    <citation type="journal article" date="2001" name="Plant Physiol.">
        <title>The organization of cytoplasmic ribosomal protein genes in the Arabidopsis genome.</title>
        <authorList>
            <person name="Barakat A."/>
            <person name="Szick-Miranda K."/>
            <person name="Chang I.-F."/>
            <person name="Guyot R."/>
            <person name="Blanc G."/>
            <person name="Cooke R."/>
            <person name="Delseny M."/>
            <person name="Bailey-Serres J."/>
        </authorList>
    </citation>
    <scope>GENE FAMILY ORGANIZATION</scope>
    <scope>NOMENCLATURE</scope>
</reference>
<reference key="8">
    <citation type="journal article" date="2023" name="Plant Cell">
        <title>An updated nomenclature for plant ribosomal protein genes.</title>
        <authorList>
            <person name="Scarpin M.R."/>
            <person name="Busche M."/>
            <person name="Martinez R.E."/>
            <person name="Harper L.C."/>
            <person name="Reiser L."/>
            <person name="Szakonyi D."/>
            <person name="Merchante C."/>
            <person name="Lan T."/>
            <person name="Xiong W."/>
            <person name="Mo B."/>
            <person name="Tang G."/>
            <person name="Chen X."/>
            <person name="Bailey-Serres J."/>
            <person name="Browning K.S."/>
            <person name="Brunkard J.O."/>
        </authorList>
    </citation>
    <scope>NOMENCLATURE</scope>
</reference>
<dbReference type="EMBL" id="AB015474">
    <property type="protein sequence ID" value="BAB02283.1"/>
    <property type="molecule type" value="Genomic_DNA"/>
</dbReference>
<dbReference type="EMBL" id="Z97336">
    <property type="protein sequence ID" value="CAB10211.1"/>
    <property type="molecule type" value="Genomic_DNA"/>
</dbReference>
<dbReference type="EMBL" id="AL161538">
    <property type="protein sequence ID" value="CAB78474.1"/>
    <property type="molecule type" value="Genomic_DNA"/>
</dbReference>
<dbReference type="EMBL" id="CP002686">
    <property type="protein sequence ID" value="AEE76760.1"/>
    <property type="molecule type" value="Genomic_DNA"/>
</dbReference>
<dbReference type="EMBL" id="CP002687">
    <property type="protein sequence ID" value="AEE83418.1"/>
    <property type="molecule type" value="Genomic_DNA"/>
</dbReference>
<dbReference type="EMBL" id="AY062855">
    <property type="protein sequence ID" value="AAL32933.1"/>
    <property type="molecule type" value="mRNA"/>
</dbReference>
<dbReference type="EMBL" id="BT001193">
    <property type="protein sequence ID" value="AAN65080.1"/>
    <property type="molecule type" value="mRNA"/>
</dbReference>
<dbReference type="EMBL" id="AY065121">
    <property type="protein sequence ID" value="AAL38297.1"/>
    <property type="molecule type" value="mRNA"/>
</dbReference>
<dbReference type="EMBL" id="AY081639">
    <property type="protein sequence ID" value="AAM10201.1"/>
    <property type="molecule type" value="mRNA"/>
</dbReference>
<dbReference type="EMBL" id="AY085174">
    <property type="protein sequence ID" value="AAM61725.1"/>
    <property type="molecule type" value="mRNA"/>
</dbReference>
<dbReference type="EMBL" id="AY085784">
    <property type="protein sequence ID" value="AAM63001.1"/>
    <property type="molecule type" value="mRNA"/>
</dbReference>
<dbReference type="PIR" id="A71405">
    <property type="entry name" value="A71405"/>
</dbReference>
<dbReference type="RefSeq" id="NP_188981.1">
    <molecule id="O23290-1"/>
    <property type="nucleotide sequence ID" value="NM_113242.4"/>
</dbReference>
<dbReference type="RefSeq" id="NP_193168.1">
    <molecule id="O23290-1"/>
    <property type="nucleotide sequence ID" value="NM_117509.3"/>
</dbReference>
<dbReference type="SMR" id="O23290"/>
<dbReference type="BioGRID" id="12371">
    <property type="interactions" value="12"/>
</dbReference>
<dbReference type="BioGRID" id="7252">
    <property type="interactions" value="17"/>
</dbReference>
<dbReference type="FunCoup" id="O23290">
    <property type="interactions" value="3079"/>
</dbReference>
<dbReference type="IntAct" id="O23290">
    <property type="interactions" value="2"/>
</dbReference>
<dbReference type="STRING" id="3702.O23290"/>
<dbReference type="PaxDb" id="3702-AT3G23390.1"/>
<dbReference type="ProteomicsDB" id="227949">
    <molecule id="O23290-1"/>
</dbReference>
<dbReference type="EnsemblPlants" id="AT3G23390.1">
    <molecule id="O23290-1"/>
    <property type="protein sequence ID" value="AT3G23390.1"/>
    <property type="gene ID" value="AT3G23390"/>
</dbReference>
<dbReference type="EnsemblPlants" id="AT4G14320.1">
    <molecule id="O23290-1"/>
    <property type="protein sequence ID" value="AT4G14320.1"/>
    <property type="gene ID" value="AT4G14320"/>
</dbReference>
<dbReference type="GeneID" id="821920"/>
<dbReference type="GeneID" id="827074"/>
<dbReference type="Gramene" id="AT3G23390.1">
    <molecule id="O23290-1"/>
    <property type="protein sequence ID" value="AT3G23390.1"/>
    <property type="gene ID" value="AT3G23390"/>
</dbReference>
<dbReference type="Gramene" id="AT4G14320.1">
    <molecule id="O23290-1"/>
    <property type="protein sequence ID" value="AT4G14320.1"/>
    <property type="gene ID" value="AT4G14320"/>
</dbReference>
<dbReference type="KEGG" id="ath:AT3G23390"/>
<dbReference type="KEGG" id="ath:AT4G14320"/>
<dbReference type="Araport" id="AT3G23390"/>
<dbReference type="Araport" id="AT4G14320"/>
<dbReference type="TAIR" id="AT3G23390">
    <property type="gene designation" value="RPL36AA"/>
</dbReference>
<dbReference type="TAIR" id="AT4G14320">
    <property type="gene designation" value="RPL36AB"/>
</dbReference>
<dbReference type="eggNOG" id="KOG3464">
    <property type="taxonomic scope" value="Eukaryota"/>
</dbReference>
<dbReference type="HOGENOM" id="CLU_114645_2_1_1"/>
<dbReference type="InParanoid" id="O23290"/>
<dbReference type="OMA" id="CKKHTIH"/>
<dbReference type="OrthoDB" id="1871757at2759"/>
<dbReference type="PhylomeDB" id="O23290"/>
<dbReference type="PRO" id="PR:O23290"/>
<dbReference type="Proteomes" id="UP000006548">
    <property type="component" value="Chromosome 3"/>
</dbReference>
<dbReference type="Proteomes" id="UP000006548">
    <property type="component" value="Chromosome 4"/>
</dbReference>
<dbReference type="ExpressionAtlas" id="O23290">
    <property type="expression patterns" value="baseline and differential"/>
</dbReference>
<dbReference type="GO" id="GO:0005829">
    <property type="term" value="C:cytosol"/>
    <property type="evidence" value="ECO:0007005"/>
    <property type="project" value="TAIR"/>
</dbReference>
<dbReference type="GO" id="GO:0022625">
    <property type="term" value="C:cytosolic large ribosomal subunit"/>
    <property type="evidence" value="ECO:0007005"/>
    <property type="project" value="TAIR"/>
</dbReference>
<dbReference type="GO" id="GO:0003735">
    <property type="term" value="F:structural constituent of ribosome"/>
    <property type="evidence" value="ECO:0000314"/>
    <property type="project" value="CAFA"/>
</dbReference>
<dbReference type="GO" id="GO:0006412">
    <property type="term" value="P:translation"/>
    <property type="evidence" value="ECO:0007669"/>
    <property type="project" value="InterPro"/>
</dbReference>
<dbReference type="FunFam" id="3.10.450.80:FF:000001">
    <property type="entry name" value="60S ribosomal protein L44"/>
    <property type="match status" value="1"/>
</dbReference>
<dbReference type="Gene3D" id="3.10.450.80">
    <property type="match status" value="1"/>
</dbReference>
<dbReference type="InterPro" id="IPR000552">
    <property type="entry name" value="Ribosomal_eL44"/>
</dbReference>
<dbReference type="InterPro" id="IPR053708">
    <property type="entry name" value="Ribosomal_LSU_eL42"/>
</dbReference>
<dbReference type="InterPro" id="IPR011332">
    <property type="entry name" value="Ribosomal_zn-bd"/>
</dbReference>
<dbReference type="PANTHER" id="PTHR10369">
    <property type="entry name" value="60S RIBOSOMAL PROTEIN L36A/L44"/>
    <property type="match status" value="1"/>
</dbReference>
<dbReference type="Pfam" id="PF00935">
    <property type="entry name" value="Ribosomal_L44"/>
    <property type="match status" value="1"/>
</dbReference>
<dbReference type="SUPFAM" id="SSF57829">
    <property type="entry name" value="Zn-binding ribosomal proteins"/>
    <property type="match status" value="1"/>
</dbReference>
<dbReference type="PROSITE" id="PS01172">
    <property type="entry name" value="RIBOSOMAL_L44E"/>
    <property type="match status" value="1"/>
</dbReference>
<accession>O23290</accession>
<accession>Q7GD84</accession>
<keyword id="KW-0025">Alternative splicing</keyword>
<keyword id="KW-1185">Reference proteome</keyword>
<keyword id="KW-0687">Ribonucleoprotein</keyword>
<keyword id="KW-0689">Ribosomal protein</keyword>
<evidence type="ECO:0000256" key="1">
    <source>
        <dbReference type="SAM" id="MobiDB-lite"/>
    </source>
</evidence>
<evidence type="ECO:0000303" key="2">
    <source>
    </source>
</evidence>
<evidence type="ECO:0000305" key="3"/>